<keyword id="KW-0067">ATP-binding</keyword>
<keyword id="KW-0963">Cytoplasm</keyword>
<keyword id="KW-0315">Glutamine amidotransferase</keyword>
<keyword id="KW-0378">Hydrolase</keyword>
<keyword id="KW-0436">Ligase</keyword>
<keyword id="KW-0547">Nucleotide-binding</keyword>
<keyword id="KW-0658">Purine biosynthesis</keyword>
<reference key="1">
    <citation type="journal article" date="2012" name="BMC Genomics">
        <title>Comparative genomics and transcriptomics of lineages I, II, and III strains of Listeria monocytogenes.</title>
        <authorList>
            <person name="Hain T."/>
            <person name="Ghai R."/>
            <person name="Billion A."/>
            <person name="Kuenne C.T."/>
            <person name="Steinweg C."/>
            <person name="Izar B."/>
            <person name="Mohamed W."/>
            <person name="Mraheil M."/>
            <person name="Domann E."/>
            <person name="Schaffrath S."/>
            <person name="Karst U."/>
            <person name="Goesmann A."/>
            <person name="Oehm S."/>
            <person name="Puhler A."/>
            <person name="Merkl R."/>
            <person name="Vorwerk S."/>
            <person name="Glaser P."/>
            <person name="Garrido P."/>
            <person name="Rusniok C."/>
            <person name="Buchrieser C."/>
            <person name="Goebel W."/>
            <person name="Chakraborty T."/>
        </authorList>
    </citation>
    <scope>NUCLEOTIDE SEQUENCE [LARGE SCALE GENOMIC DNA]</scope>
    <source>
        <strain>CLIP80459</strain>
    </source>
</reference>
<comment type="function">
    <text evidence="1">Part of the phosphoribosylformylglycinamidine synthase complex involved in the purines biosynthetic pathway. Catalyzes the ATP-dependent conversion of formylglycinamide ribonucleotide (FGAR) and glutamine to yield formylglycinamidine ribonucleotide (FGAM) and glutamate. The FGAM synthase complex is composed of three subunits. PurQ produces an ammonia molecule by converting glutamine to glutamate. PurL transfers the ammonia molecule to FGAR to form FGAM in an ATP-dependent manner. PurS interacts with PurQ and PurL and is thought to assist in the transfer of the ammonia molecule from PurQ to PurL.</text>
</comment>
<comment type="catalytic activity">
    <reaction evidence="1">
        <text>N(2)-formyl-N(1)-(5-phospho-beta-D-ribosyl)glycinamide + L-glutamine + ATP + H2O = 2-formamido-N(1)-(5-O-phospho-beta-D-ribosyl)acetamidine + L-glutamate + ADP + phosphate + H(+)</text>
        <dbReference type="Rhea" id="RHEA:17129"/>
        <dbReference type="ChEBI" id="CHEBI:15377"/>
        <dbReference type="ChEBI" id="CHEBI:15378"/>
        <dbReference type="ChEBI" id="CHEBI:29985"/>
        <dbReference type="ChEBI" id="CHEBI:30616"/>
        <dbReference type="ChEBI" id="CHEBI:43474"/>
        <dbReference type="ChEBI" id="CHEBI:58359"/>
        <dbReference type="ChEBI" id="CHEBI:147286"/>
        <dbReference type="ChEBI" id="CHEBI:147287"/>
        <dbReference type="ChEBI" id="CHEBI:456216"/>
        <dbReference type="EC" id="6.3.5.3"/>
    </reaction>
</comment>
<comment type="catalytic activity">
    <reaction evidence="1">
        <text>L-glutamine + H2O = L-glutamate + NH4(+)</text>
        <dbReference type="Rhea" id="RHEA:15889"/>
        <dbReference type="ChEBI" id="CHEBI:15377"/>
        <dbReference type="ChEBI" id="CHEBI:28938"/>
        <dbReference type="ChEBI" id="CHEBI:29985"/>
        <dbReference type="ChEBI" id="CHEBI:58359"/>
        <dbReference type="EC" id="3.5.1.2"/>
    </reaction>
</comment>
<comment type="pathway">
    <text evidence="1">Purine metabolism; IMP biosynthesis via de novo pathway; 5-amino-1-(5-phospho-D-ribosyl)imidazole from N(2)-formyl-N(1)-(5-phospho-D-ribosyl)glycinamide: step 1/2.</text>
</comment>
<comment type="subunit">
    <text evidence="1">Part of the FGAM synthase complex composed of 1 PurL, 1 PurQ and 2 PurS subunits.</text>
</comment>
<comment type="subcellular location">
    <subcellularLocation>
        <location evidence="1">Cytoplasm</location>
    </subcellularLocation>
</comment>
<dbReference type="EC" id="6.3.5.3" evidence="1"/>
<dbReference type="EC" id="3.5.1.2" evidence="1"/>
<dbReference type="EMBL" id="FM242711">
    <property type="protein sequence ID" value="CAS05544.1"/>
    <property type="molecule type" value="Genomic_DNA"/>
</dbReference>
<dbReference type="RefSeq" id="WP_003726212.1">
    <property type="nucleotide sequence ID" value="NC_012488.1"/>
</dbReference>
<dbReference type="SMR" id="C1KW69"/>
<dbReference type="KEGG" id="lmc:Lm4b_01784"/>
<dbReference type="HOGENOM" id="CLU_001031_3_1_9"/>
<dbReference type="UniPathway" id="UPA00074">
    <property type="reaction ID" value="UER00128"/>
</dbReference>
<dbReference type="GO" id="GO:0005737">
    <property type="term" value="C:cytoplasm"/>
    <property type="evidence" value="ECO:0007669"/>
    <property type="project" value="UniProtKB-SubCell"/>
</dbReference>
<dbReference type="GO" id="GO:0005524">
    <property type="term" value="F:ATP binding"/>
    <property type="evidence" value="ECO:0007669"/>
    <property type="project" value="UniProtKB-KW"/>
</dbReference>
<dbReference type="GO" id="GO:0004359">
    <property type="term" value="F:glutaminase activity"/>
    <property type="evidence" value="ECO:0007669"/>
    <property type="project" value="UniProtKB-EC"/>
</dbReference>
<dbReference type="GO" id="GO:0004642">
    <property type="term" value="F:phosphoribosylformylglycinamidine synthase activity"/>
    <property type="evidence" value="ECO:0007669"/>
    <property type="project" value="UniProtKB-UniRule"/>
</dbReference>
<dbReference type="GO" id="GO:0006189">
    <property type="term" value="P:'de novo' IMP biosynthetic process"/>
    <property type="evidence" value="ECO:0007669"/>
    <property type="project" value="UniProtKB-UniRule"/>
</dbReference>
<dbReference type="CDD" id="cd01740">
    <property type="entry name" value="GATase1_FGAR_AT"/>
    <property type="match status" value="1"/>
</dbReference>
<dbReference type="FunFam" id="3.40.50.880:FF:000019">
    <property type="entry name" value="Phosphoribosylformylglycinamidine synthase subunit PurQ"/>
    <property type="match status" value="1"/>
</dbReference>
<dbReference type="Gene3D" id="3.40.50.880">
    <property type="match status" value="1"/>
</dbReference>
<dbReference type="HAMAP" id="MF_00421">
    <property type="entry name" value="PurQ"/>
    <property type="match status" value="1"/>
</dbReference>
<dbReference type="InterPro" id="IPR029062">
    <property type="entry name" value="Class_I_gatase-like"/>
</dbReference>
<dbReference type="InterPro" id="IPR010075">
    <property type="entry name" value="PRibForGlyAmidine_synth_PurQ"/>
</dbReference>
<dbReference type="NCBIfam" id="TIGR01737">
    <property type="entry name" value="FGAM_synth_I"/>
    <property type="match status" value="1"/>
</dbReference>
<dbReference type="NCBIfam" id="NF002957">
    <property type="entry name" value="PRK03619.1"/>
    <property type="match status" value="1"/>
</dbReference>
<dbReference type="PANTHER" id="PTHR47552">
    <property type="entry name" value="PHOSPHORIBOSYLFORMYLGLYCINAMIDINE SYNTHASE SUBUNIT PURQ"/>
    <property type="match status" value="1"/>
</dbReference>
<dbReference type="PANTHER" id="PTHR47552:SF1">
    <property type="entry name" value="PHOSPHORIBOSYLFORMYLGLYCINAMIDINE SYNTHASE SUBUNIT PURQ"/>
    <property type="match status" value="1"/>
</dbReference>
<dbReference type="Pfam" id="PF13507">
    <property type="entry name" value="GATase_5"/>
    <property type="match status" value="1"/>
</dbReference>
<dbReference type="PIRSF" id="PIRSF001586">
    <property type="entry name" value="FGAM_synth_I"/>
    <property type="match status" value="1"/>
</dbReference>
<dbReference type="SMART" id="SM01211">
    <property type="entry name" value="GATase_5"/>
    <property type="match status" value="1"/>
</dbReference>
<dbReference type="SUPFAM" id="SSF52317">
    <property type="entry name" value="Class I glutamine amidotransferase-like"/>
    <property type="match status" value="1"/>
</dbReference>
<dbReference type="PROSITE" id="PS51273">
    <property type="entry name" value="GATASE_TYPE_1"/>
    <property type="match status" value="1"/>
</dbReference>
<organism>
    <name type="scientific">Listeria monocytogenes serotype 4b (strain CLIP80459)</name>
    <dbReference type="NCBI Taxonomy" id="568819"/>
    <lineage>
        <taxon>Bacteria</taxon>
        <taxon>Bacillati</taxon>
        <taxon>Bacillota</taxon>
        <taxon>Bacilli</taxon>
        <taxon>Bacillales</taxon>
        <taxon>Listeriaceae</taxon>
        <taxon>Listeria</taxon>
    </lineage>
</organism>
<protein>
    <recommendedName>
        <fullName evidence="1">Phosphoribosylformylglycinamidine synthase subunit PurQ</fullName>
        <shortName evidence="1">FGAM synthase</shortName>
        <ecNumber evidence="1">6.3.5.3</ecNumber>
    </recommendedName>
    <alternativeName>
        <fullName evidence="1">Formylglycinamide ribonucleotide amidotransferase subunit I</fullName>
        <shortName evidence="1">FGAR amidotransferase I</shortName>
        <shortName evidence="1">FGAR-AT I</shortName>
    </alternativeName>
    <alternativeName>
        <fullName evidence="1">Glutaminase PurQ</fullName>
        <ecNumber evidence="1">3.5.1.2</ecNumber>
    </alternativeName>
    <alternativeName>
        <fullName evidence="1">Phosphoribosylformylglycinamidine synthase subunit I</fullName>
    </alternativeName>
</protein>
<sequence length="227" mass="24870">MKFAVIQFPGSNCDLDMLHAIRDSLGEEAEYVWHAETSLAGFDAVLLPGGFSYGDYLRTGAIAKFSSIMPEVLRFAEMGKPVLGVCNGFQILTEIGLLPGALIRNNNLHFICKTVPLRVANASTMFTGLYKEGEIIQVPVAHGEGNYYCDDETLLKLKDNNQIVFTYDSVNPNGSRADIAGIVNERGNVLGMMPHPERAVEEIIGGTDGLRLFESVVKAWKEEQVNA</sequence>
<gene>
    <name evidence="1" type="primary">purQ</name>
    <name type="ordered locus">Lm4b_01784</name>
</gene>
<accession>C1KW69</accession>
<proteinExistence type="inferred from homology"/>
<evidence type="ECO:0000255" key="1">
    <source>
        <dbReference type="HAMAP-Rule" id="MF_00421"/>
    </source>
</evidence>
<feature type="chain" id="PRO_1000206054" description="Phosphoribosylformylglycinamidine synthase subunit PurQ">
    <location>
        <begin position="1"/>
        <end position="227"/>
    </location>
</feature>
<feature type="domain" description="Glutamine amidotransferase type-1" evidence="1">
    <location>
        <begin position="2"/>
        <end position="226"/>
    </location>
</feature>
<feature type="active site" description="Nucleophile" evidence="1">
    <location>
        <position position="86"/>
    </location>
</feature>
<feature type="active site" evidence="1">
    <location>
        <position position="195"/>
    </location>
</feature>
<feature type="active site" evidence="1">
    <location>
        <position position="197"/>
    </location>
</feature>
<name>PURQ_LISMC</name>